<evidence type="ECO:0000269" key="1">
    <source>
    </source>
</evidence>
<evidence type="ECO:0000305" key="2"/>
<accession>P82151</accession>
<comment type="function">
    <text evidence="1">Lipopolysaccharide-binding protein with Gram-negative antibacterial activity. Binds zinc and calcium.</text>
</comment>
<comment type="subcellular location">
    <subcellularLocation>
        <location>Cytoplasmic vesicle</location>
        <location>Secretory vesicle</location>
    </subcellularLocation>
    <text>L-granules.</text>
</comment>
<comment type="tissue specificity">
    <text>Hemocytes.</text>
</comment>
<comment type="similarity">
    <text evidence="2">Belongs to the tectonin family.</text>
</comment>
<proteinExistence type="evidence at protein level"/>
<sequence>VQWHQIPGKLMHITATPHFLWGVNSNQQIYLCRQPCYDGQWTQISGSLKQVDADDHEVWGVNRNDDIYKRPVDGSGSWVRVSGKLKHVSASGYGYIWGVNSNDQIYKCPKPCNGAWTQVNGRLKQIDGGQSMVYGVNSANAIYRRPVDGSGSWQQISGSLKHITGSGLSEVFGVNSNDQIYRCTKPCSGQWSLIDGRLKQCDATGNTIVGVNSVDNIYRSG</sequence>
<reference key="1">
    <citation type="journal article" date="1995" name="J. Biol. Chem.">
        <title>A novel type of limulus lectin-L6. Purification, primary structure, and antibacterial activity.</title>
        <authorList>
            <person name="Saito T."/>
            <person name="Kawabata S."/>
            <person name="Hirata M."/>
            <person name="Iwanaga S."/>
        </authorList>
    </citation>
    <scope>PROTEIN SEQUENCE</scope>
    <scope>DISULFIDE BONDS</scope>
    <scope>FUNCTION</scope>
    <source>
        <tissue>Hemocyte</tissue>
    </source>
</reference>
<reference key="2">
    <citation type="journal article" date="1993" name="J. Biochem.">
        <title>Separation of large and small granules from horseshoe crab (Tachypleus tridentatus) hemocytes and characterization of their components.</title>
        <authorList>
            <person name="Shigenaga T."/>
            <person name="Takayenoki Y."/>
            <person name="Kawasaki S."/>
            <person name="Seki N."/>
            <person name="Muta T."/>
            <person name="Toh Y."/>
            <person name="Ito A."/>
            <person name="Iwanaga S."/>
        </authorList>
    </citation>
    <scope>PROTEIN SEQUENCE OF 1-17</scope>
</reference>
<feature type="chain" id="PRO_0000221475" description="Lectin L6">
    <location>
        <begin position="1"/>
        <end position="221"/>
    </location>
</feature>
<feature type="repeat" description="1">
    <location>
        <begin position="1"/>
        <end position="38"/>
    </location>
</feature>
<feature type="repeat" description="2">
    <location>
        <begin position="39"/>
        <end position="75"/>
    </location>
</feature>
<feature type="repeat" description="3">
    <location>
        <begin position="76"/>
        <end position="113"/>
    </location>
</feature>
<feature type="repeat" description="4">
    <location>
        <begin position="114"/>
        <end position="150"/>
    </location>
</feature>
<feature type="repeat" description="5">
    <location>
        <begin position="151"/>
        <end position="188"/>
    </location>
</feature>
<feature type="repeat" description="6">
    <location>
        <begin position="189"/>
        <end position="221"/>
    </location>
</feature>
<feature type="region of interest" description="6 X approximate tandem repeats">
    <location>
        <begin position="1"/>
        <end position="221"/>
    </location>
</feature>
<feature type="disulfide bond" evidence="1">
    <location>
        <begin position="32"/>
        <end position="36"/>
    </location>
</feature>
<feature type="disulfide bond" evidence="1">
    <location>
        <begin position="108"/>
        <end position="112"/>
    </location>
</feature>
<feature type="disulfide bond" evidence="1">
    <location>
        <begin position="183"/>
        <end position="187"/>
    </location>
</feature>
<name>LEC6_TACTR</name>
<keyword id="KW-0044">Antibiotic</keyword>
<keyword id="KW-0929">Antimicrobial</keyword>
<keyword id="KW-0106">Calcium</keyword>
<keyword id="KW-0968">Cytoplasmic vesicle</keyword>
<keyword id="KW-0903">Direct protein sequencing</keyword>
<keyword id="KW-1015">Disulfide bond</keyword>
<keyword id="KW-0430">Lectin</keyword>
<keyword id="KW-0479">Metal-binding</keyword>
<keyword id="KW-0677">Repeat</keyword>
<keyword id="KW-0862">Zinc</keyword>
<protein>
    <recommendedName>
        <fullName>Lectin L6</fullName>
    </recommendedName>
</protein>
<dbReference type="PIR" id="PC1318">
    <property type="entry name" value="PC1318"/>
</dbReference>
<dbReference type="SMR" id="P82151"/>
<dbReference type="GO" id="GO:0030133">
    <property type="term" value="C:transport vesicle"/>
    <property type="evidence" value="ECO:0007669"/>
    <property type="project" value="UniProtKB-SubCell"/>
</dbReference>
<dbReference type="GO" id="GO:0030246">
    <property type="term" value="F:carbohydrate binding"/>
    <property type="evidence" value="ECO:0007669"/>
    <property type="project" value="UniProtKB-KW"/>
</dbReference>
<dbReference type="GO" id="GO:0046872">
    <property type="term" value="F:metal ion binding"/>
    <property type="evidence" value="ECO:0007669"/>
    <property type="project" value="UniProtKB-KW"/>
</dbReference>
<dbReference type="GO" id="GO:0042742">
    <property type="term" value="P:defense response to bacterium"/>
    <property type="evidence" value="ECO:0007669"/>
    <property type="project" value="UniProtKB-KW"/>
</dbReference>
<dbReference type="InterPro" id="IPR006624">
    <property type="entry name" value="Beta-propeller_rpt_TECPR"/>
</dbReference>
<dbReference type="InterPro" id="IPR051513">
    <property type="entry name" value="Tectonin_beta-propeller"/>
</dbReference>
<dbReference type="PANTHER" id="PTHR23250">
    <property type="entry name" value="DYSFERLIN-RELATED"/>
    <property type="match status" value="1"/>
</dbReference>
<dbReference type="PANTHER" id="PTHR23250:SF3">
    <property type="entry name" value="FISH-EGG LECTIN-LIKE ISOFORM X1-RELATED"/>
    <property type="match status" value="1"/>
</dbReference>
<dbReference type="Pfam" id="PF19193">
    <property type="entry name" value="Tectonin"/>
    <property type="match status" value="1"/>
</dbReference>
<dbReference type="SMART" id="SM00706">
    <property type="entry name" value="TECPR"/>
    <property type="match status" value="6"/>
</dbReference>
<dbReference type="SUPFAM" id="SSF89372">
    <property type="entry name" value="Fucose-specific lectin"/>
    <property type="match status" value="1"/>
</dbReference>
<organism>
    <name type="scientific">Tachypleus tridentatus</name>
    <name type="common">Japanese horseshoe crab</name>
    <dbReference type="NCBI Taxonomy" id="6853"/>
    <lineage>
        <taxon>Eukaryota</taxon>
        <taxon>Metazoa</taxon>
        <taxon>Ecdysozoa</taxon>
        <taxon>Arthropoda</taxon>
        <taxon>Chelicerata</taxon>
        <taxon>Merostomata</taxon>
        <taxon>Xiphosura</taxon>
        <taxon>Limulidae</taxon>
        <taxon>Tachypleus</taxon>
    </lineage>
</organism>